<proteinExistence type="evidence at protein level"/>
<feature type="peptide" id="PRO_0000009055" description="Fibrinopeptide B" evidence="8">
    <location>
        <begin position="1"/>
        <end position="21"/>
    </location>
</feature>
<feature type="chain" id="PRO_0000009056" description="Fibrinogen beta chain">
    <location>
        <begin position="22"/>
        <end position="468"/>
    </location>
</feature>
<feature type="domain" description="Fibrinogen C-terminal" evidence="3">
    <location>
        <begin position="209"/>
        <end position="465"/>
    </location>
</feature>
<feature type="region of interest" description="Disordered" evidence="4">
    <location>
        <begin position="1"/>
        <end position="54"/>
    </location>
</feature>
<feature type="coiled-coil region" evidence="12">
    <location>
        <begin position="88"/>
        <end position="204"/>
    </location>
</feature>
<feature type="compositionally biased region" description="Acidic residues" evidence="4">
    <location>
        <begin position="1"/>
        <end position="10"/>
    </location>
</feature>
<feature type="compositionally biased region" description="Basic and acidic residues" evidence="4">
    <location>
        <begin position="24"/>
        <end position="34"/>
    </location>
</feature>
<feature type="site" description="Cleavage; by thrombin; to release fibrinopeptide B">
    <location>
        <begin position="21"/>
        <end position="22"/>
    </location>
</feature>
<feature type="modified residue" description="Pyrrolidone carboxylic acid" evidence="9">
    <location>
        <position position="1"/>
    </location>
</feature>
<feature type="modified residue" description="Sulfotyrosine" evidence="10">
    <location>
        <position position="6"/>
    </location>
</feature>
<feature type="glycosylation site" description="O-linked (GalNAc...) threonine" evidence="7">
    <location>
        <position position="4"/>
    </location>
</feature>
<feature type="glycosylation site" description="N-linked (GlcNAc...) asparagine" evidence="11">
    <location>
        <position position="371"/>
    </location>
</feature>
<feature type="disulfide bond" description="Interchain (with C-58 in alpha chain)" evidence="5">
    <location>
        <position position="72"/>
    </location>
</feature>
<feature type="disulfide bond" description="Interchain (with C-71 in alpha chain)" evidence="5">
    <location>
        <position position="83"/>
    </location>
</feature>
<feature type="disulfide bond" description="Interchain (with C-43 in gamma chain)">
    <location>
        <position position="87"/>
    </location>
</feature>
<feature type="disulfide bond" description="Interchain (with C-187 in alpha chain)" evidence="2">
    <location>
        <position position="200"/>
    </location>
</feature>
<feature type="disulfide bond" description="Interchain (with C-159 in gamma chain)" evidence="2">
    <location>
        <position position="204"/>
    </location>
</feature>
<feature type="disulfide bond" evidence="3">
    <location>
        <begin position="208"/>
        <end position="293"/>
    </location>
</feature>
<feature type="disulfide bond" evidence="3">
    <location>
        <begin position="218"/>
        <end position="247"/>
    </location>
</feature>
<feature type="disulfide bond" evidence="3">
    <location>
        <begin position="401"/>
        <end position="414"/>
    </location>
</feature>
<feature type="turn" evidence="13">
    <location>
        <begin position="77"/>
        <end position="79"/>
    </location>
</feature>
<feature type="strand" evidence="13">
    <location>
        <begin position="81"/>
        <end position="84"/>
    </location>
</feature>
<feature type="helix" evidence="13">
    <location>
        <begin position="86"/>
        <end position="112"/>
    </location>
</feature>
<gene>
    <name type="primary">FGB</name>
</gene>
<dbReference type="EMBL" id="V00110">
    <property type="protein sequence ID" value="CAA23444.1"/>
    <property type="molecule type" value="mRNA"/>
</dbReference>
<dbReference type="PIR" id="A03122">
    <property type="entry name" value="FGBOB"/>
</dbReference>
<dbReference type="PIR" id="S69115">
    <property type="entry name" value="S69115"/>
</dbReference>
<dbReference type="PDB" id="1DEQ">
    <property type="method" value="X-ray"/>
    <property type="resolution" value="3.50 A"/>
    <property type="chains" value="B/E/O/R=61-468"/>
</dbReference>
<dbReference type="PDB" id="1JY2">
    <property type="method" value="X-ray"/>
    <property type="resolution" value="1.40 A"/>
    <property type="chains" value="O/R=61-116"/>
</dbReference>
<dbReference type="PDB" id="1JY3">
    <property type="method" value="X-ray"/>
    <property type="resolution" value="1.60 A"/>
    <property type="chains" value="O/R=61-116"/>
</dbReference>
<dbReference type="PDB" id="2Z4E">
    <property type="method" value="X-ray"/>
    <property type="resolution" value="2.70 A"/>
    <property type="chains" value="I/J=22-26"/>
</dbReference>
<dbReference type="PDB" id="3H32">
    <property type="method" value="X-ray"/>
    <property type="resolution" value="3.60 A"/>
    <property type="chains" value="M/N=22-26"/>
</dbReference>
<dbReference type="PDBsum" id="1DEQ"/>
<dbReference type="PDBsum" id="1JY2"/>
<dbReference type="PDBsum" id="1JY3"/>
<dbReference type="PDBsum" id="2Z4E"/>
<dbReference type="PDBsum" id="3H32"/>
<dbReference type="SMR" id="P02676"/>
<dbReference type="FunCoup" id="P02676">
    <property type="interactions" value="486"/>
</dbReference>
<dbReference type="STRING" id="9913.ENSBTAP00000067912"/>
<dbReference type="GlyConnect" id="735">
    <property type="glycosylation" value="1 O-Linked glycan (1 site)"/>
</dbReference>
<dbReference type="GlyCosmos" id="P02676">
    <property type="glycosylation" value="2 sites, No reported glycans"/>
</dbReference>
<dbReference type="GlyGen" id="P02676">
    <property type="glycosylation" value="2 sites"/>
</dbReference>
<dbReference type="iPTMnet" id="P02676"/>
<dbReference type="PaxDb" id="9913-ENSBTAP00000029826"/>
<dbReference type="PeptideAtlas" id="P02676"/>
<dbReference type="eggNOG" id="KOG2579">
    <property type="taxonomic scope" value="Eukaryota"/>
</dbReference>
<dbReference type="InParanoid" id="P02676"/>
<dbReference type="EvolutionaryTrace" id="P02676"/>
<dbReference type="Proteomes" id="UP000009136">
    <property type="component" value="Unplaced"/>
</dbReference>
<dbReference type="GO" id="GO:0062023">
    <property type="term" value="C:collagen-containing extracellular matrix"/>
    <property type="evidence" value="ECO:0000318"/>
    <property type="project" value="GO_Central"/>
</dbReference>
<dbReference type="GO" id="GO:0005615">
    <property type="term" value="C:extracellular space"/>
    <property type="evidence" value="ECO:0000318"/>
    <property type="project" value="GO_Central"/>
</dbReference>
<dbReference type="GO" id="GO:0005577">
    <property type="term" value="C:fibrinogen complex"/>
    <property type="evidence" value="ECO:0007669"/>
    <property type="project" value="InterPro"/>
</dbReference>
<dbReference type="GO" id="GO:0005102">
    <property type="term" value="F:signaling receptor binding"/>
    <property type="evidence" value="ECO:0007669"/>
    <property type="project" value="InterPro"/>
</dbReference>
<dbReference type="GO" id="GO:0002250">
    <property type="term" value="P:adaptive immune response"/>
    <property type="evidence" value="ECO:0007669"/>
    <property type="project" value="UniProtKB-KW"/>
</dbReference>
<dbReference type="GO" id="GO:0072378">
    <property type="term" value="P:blood coagulation, fibrin clot formation"/>
    <property type="evidence" value="ECO:0000318"/>
    <property type="project" value="GO_Central"/>
</dbReference>
<dbReference type="GO" id="GO:0007160">
    <property type="term" value="P:cell-matrix adhesion"/>
    <property type="evidence" value="ECO:0000318"/>
    <property type="project" value="GO_Central"/>
</dbReference>
<dbReference type="GO" id="GO:0045087">
    <property type="term" value="P:innate immune response"/>
    <property type="evidence" value="ECO:0007669"/>
    <property type="project" value="UniProtKB-KW"/>
</dbReference>
<dbReference type="GO" id="GO:0070527">
    <property type="term" value="P:platelet aggregation"/>
    <property type="evidence" value="ECO:0000318"/>
    <property type="project" value="GO_Central"/>
</dbReference>
<dbReference type="GO" id="GO:0051258">
    <property type="term" value="P:protein polymerization"/>
    <property type="evidence" value="ECO:0007669"/>
    <property type="project" value="InterPro"/>
</dbReference>
<dbReference type="CDD" id="cd00087">
    <property type="entry name" value="FReD"/>
    <property type="match status" value="1"/>
</dbReference>
<dbReference type="FunFam" id="1.20.5.50:FF:000004">
    <property type="entry name" value="Fibrinogen beta chain"/>
    <property type="match status" value="1"/>
</dbReference>
<dbReference type="FunFam" id="3.90.215.10:FF:000006">
    <property type="entry name" value="Fibrinogen beta chain"/>
    <property type="match status" value="1"/>
</dbReference>
<dbReference type="FunFam" id="4.10.530.10:FF:000004">
    <property type="entry name" value="Fibrinogen beta chain"/>
    <property type="match status" value="1"/>
</dbReference>
<dbReference type="Gene3D" id="1.20.5.50">
    <property type="match status" value="2"/>
</dbReference>
<dbReference type="Gene3D" id="3.90.215.10">
    <property type="entry name" value="Gamma Fibrinogen, chain A, domain 1"/>
    <property type="match status" value="1"/>
</dbReference>
<dbReference type="InterPro" id="IPR037579">
    <property type="entry name" value="FIB_ANG-like"/>
</dbReference>
<dbReference type="InterPro" id="IPR036056">
    <property type="entry name" value="Fibrinogen-like_C"/>
</dbReference>
<dbReference type="InterPro" id="IPR014716">
    <property type="entry name" value="Fibrinogen_a/b/g_C_1"/>
</dbReference>
<dbReference type="InterPro" id="IPR002181">
    <property type="entry name" value="Fibrinogen_a/b/g_C_dom"/>
</dbReference>
<dbReference type="InterPro" id="IPR012290">
    <property type="entry name" value="Fibrinogen_a/b/g_coil_dom"/>
</dbReference>
<dbReference type="InterPro" id="IPR020837">
    <property type="entry name" value="Fibrinogen_CS"/>
</dbReference>
<dbReference type="NCBIfam" id="NF040941">
    <property type="entry name" value="GGGWT_bact"/>
    <property type="match status" value="1"/>
</dbReference>
<dbReference type="PANTHER" id="PTHR47221">
    <property type="entry name" value="FIBRINOGEN ALPHA CHAIN"/>
    <property type="match status" value="1"/>
</dbReference>
<dbReference type="PANTHER" id="PTHR47221:SF5">
    <property type="entry name" value="FIBRINOGEN C-TERMINAL DOMAIN-CONTAINING PROTEIN"/>
    <property type="match status" value="1"/>
</dbReference>
<dbReference type="Pfam" id="PF08702">
    <property type="entry name" value="Fib_alpha"/>
    <property type="match status" value="1"/>
</dbReference>
<dbReference type="Pfam" id="PF00147">
    <property type="entry name" value="Fibrinogen_C"/>
    <property type="match status" value="1"/>
</dbReference>
<dbReference type="SMART" id="SM00186">
    <property type="entry name" value="FBG"/>
    <property type="match status" value="1"/>
</dbReference>
<dbReference type="SMART" id="SM01212">
    <property type="entry name" value="Fib_alpha"/>
    <property type="match status" value="1"/>
</dbReference>
<dbReference type="SUPFAM" id="SSF56496">
    <property type="entry name" value="Fibrinogen C-terminal domain-like"/>
    <property type="match status" value="1"/>
</dbReference>
<dbReference type="SUPFAM" id="SSF58010">
    <property type="entry name" value="Fibrinogen coiled-coil and central regions"/>
    <property type="match status" value="1"/>
</dbReference>
<dbReference type="PROSITE" id="PS00514">
    <property type="entry name" value="FIBRINOGEN_C_1"/>
    <property type="match status" value="1"/>
</dbReference>
<dbReference type="PROSITE" id="PS51406">
    <property type="entry name" value="FIBRINOGEN_C_2"/>
    <property type="match status" value="1"/>
</dbReference>
<name>FIBB_BOVIN</name>
<comment type="function">
    <text evidence="1">Cleaved by the protease thrombin to yield monomers which, together with fibrinogen alpha (FGA) and fibrinogen gamma (FGG), polymerize to form an insoluble fibrin matrix. Fibrin has a major function in hemostasis as one of the primary components of blood clots. In addition, functions during the early stages of wound repair to stabilize the lesion and guide cell migration during re-epithelialization. Was originally thought to be essential for platelet aggregation, based on in vitro studies using anticoagulated blood. However subsequent studies have shown that it is not absolutely required for thrombus formation in vivo. Enhances expression of SELP in activated platelets. Maternal fibrinogen is essential for successful pregnancy. Fibrin deposition is also associated with infection, where it protects against IFNG-mediated hemorrhage. May also facilitate the antibacterial immune response via both innate and T-cell mediated pathways.</text>
</comment>
<comment type="subunit">
    <text evidence="5 6">Heterohexamer; disulfide linked. Contains 2 sets of 3 non-identical chains (alpha, beta and gamma). The 2 heterotrimers are in head to head conformation with the N-termini in a small central domain.</text>
</comment>
<comment type="subcellular location">
    <subcellularLocation>
        <location evidence="5">Secreted</location>
    </subcellularLocation>
</comment>
<comment type="tissue specificity">
    <text evidence="5">Detected in blood plasma (at protein level).</text>
</comment>
<comment type="domain">
    <text evidence="6">A long coiled coil structure formed by 3 polypeptide chains connects the central nodule to the C-terminal domains (distal nodules). The long C-terminal ends of the alpha chains fold back, contributing a fourth strand to the coiled coil structure.</text>
</comment>
<comment type="PTM">
    <text>Conversion of fibrinogen to fibrin is triggered by thrombin, which cleaves fibrinopeptides A and B from alpha and beta chains, and thus exposes the N-terminal polymerization sites responsible for the formation of the soft clot. The soft clot is converted into the hard clot by factor XIIIA which catalyzes the epsilon-(gamma-glutamyl)lysine cross-linking between gamma chains (stronger) and between alpha chains (weaker) of different monomers.</text>
</comment>
<organism>
    <name type="scientific">Bos taurus</name>
    <name type="common">Bovine</name>
    <dbReference type="NCBI Taxonomy" id="9913"/>
    <lineage>
        <taxon>Eukaryota</taxon>
        <taxon>Metazoa</taxon>
        <taxon>Chordata</taxon>
        <taxon>Craniata</taxon>
        <taxon>Vertebrata</taxon>
        <taxon>Euteleostomi</taxon>
        <taxon>Mammalia</taxon>
        <taxon>Eutheria</taxon>
        <taxon>Laurasiatheria</taxon>
        <taxon>Artiodactyla</taxon>
        <taxon>Ruminantia</taxon>
        <taxon>Pecora</taxon>
        <taxon>Bovidae</taxon>
        <taxon>Bovinae</taxon>
        <taxon>Bos</taxon>
    </lineage>
</organism>
<reference key="1">
    <citation type="journal article" date="1963" name="Acta Chem. Scand.">
        <title>The sequence of amino acids at the N-terminal end of bovine fibrinopeptide B.</title>
        <authorList>
            <person name="Blombaeck B."/>
            <person name="Doolittle R.F."/>
        </authorList>
    </citation>
    <scope>PROTEIN SEQUENCE OF 1-4</scope>
    <scope>PYROGLUTAMATE FORMATION AT GLN-1</scope>
</reference>
<reference key="2">
    <citation type="journal article" date="1960" name="Ark. Kemi">
        <title>Amino acid sequence of bovine fibrinopeptides.</title>
        <authorList>
            <person name="Sjoquist J."/>
            <person name="Blombaeck B."/>
            <person name="Wallen P."/>
        </authorList>
    </citation>
    <scope>PROTEIN SEQUENCE OF 5-21</scope>
    <scope>SULFATION AT TYR-6</scope>
</reference>
<reference key="3">
    <citation type="journal article" date="1979" name="Arch. Biochem. Biophys.">
        <title>Amino acid sequences of portions of the alpha and beta chains of bovine fibrinogen.</title>
        <authorList>
            <person name="Martinelli R.A."/>
            <person name="Inglis A.S."/>
            <person name="Rubira M.R."/>
            <person name="Hageman T.C."/>
            <person name="Hurrell J.G.R."/>
            <person name="Leach S.J."/>
            <person name="Scheraga H.A."/>
        </authorList>
    </citation>
    <scope>PROTEIN SEQUENCE OF 22-53</scope>
</reference>
<reference key="4">
    <citation type="journal article" date="1981" name="Proc. Natl. Acad. Sci. U.S.A.">
        <title>Characterization of a cDNA clone coding for the beta chain of bovine fibrinogen.</title>
        <authorList>
            <person name="Chung D.W."/>
            <person name="Rixon M.W."/>
            <person name="McGillivray R.T.A."/>
            <person name="Davie E.W."/>
        </authorList>
    </citation>
    <scope>NUCLEOTIDE SEQUENCE [MRNA] OF 44-468</scope>
</reference>
<reference key="5">
    <citation type="journal article" date="2009" name="Mol. Cell. Proteomics">
        <title>Affinity enrichment and characterization of mucin core-1 type glycopeptides from bovine serum.</title>
        <authorList>
            <person name="Darula Z."/>
            <person name="Medzihradszky K.F."/>
        </authorList>
    </citation>
    <scope>GLYCOSYLATION AT THR-4</scope>
    <scope>IDENTIFICATION BY MASS SPECTROMETRY</scope>
</reference>
<reference key="6">
    <citation type="journal article" date="1991" name="J. Mol. Biol.">
        <title>Fibrinogen structure in projection at 18 A resolution. Electron density by co-ordinated cryo-electron microscopy and X-ray crystallography.</title>
        <authorList>
            <person name="Rao S.P."/>
            <person name="Poojary M.D."/>
            <person name="Elliott B.W. Jr."/>
            <person name="Melanson L.A."/>
            <person name="Oriel B."/>
            <person name="Cohen C."/>
        </authorList>
    </citation>
    <scope>X-RAY CRYSTALLOGRAPHY (3.5 ANGSTROMS) OF 61-468</scope>
    <scope>COILED COIL DOMAIN</scope>
    <scope>SUBUNIT</scope>
</reference>
<reference key="7">
    <citation type="journal article" date="2001" name="Proc. Natl. Acad. Sci. U.S.A.">
        <title>Crystal structure of the central region of bovine fibrinogen (E5 fragment) at 1.4-A resolution.</title>
        <authorList>
            <person name="Madrazo J."/>
            <person name="Brown J.H."/>
            <person name="Litvinovich S."/>
            <person name="Dominguez R."/>
            <person name="Yakovlev S."/>
            <person name="Medved L."/>
            <person name="Cohen C."/>
        </authorList>
    </citation>
    <scope>X-RAY CRYSTALLOGRAPHY (1.40 ANGSTROMS) OF 61-116</scope>
    <scope>SUBUNIT</scope>
    <scope>DISULFIDE BONDS</scope>
    <scope>SUBCELLULAR LOCATION</scope>
    <scope>TISSUE SPECIFICITY</scope>
</reference>
<sequence length="468" mass="53340">QFPTDYDEGQDDRPKVGLGARGHRPYDKKKEEAPSLRPVPPPISGGGYRARPATATVGQKKVERKPPDADGCLHADPDLGVLCPTGCKLQDTLVRQERPIRKSIEDLRNTVDSVSRTSSSTFQYITLLKNMWKGRQNQVQDNENVVNEYSSHLEKHQLYIDETVKNNIPTKLRVLRSILENLRSKIQKLESDVSTQMEYCRTPCTVTCNIPVVSGKECEKIIRNEGETSEMYLIQPEDSSKPYRVYCDMKTEKGGWTVIQNRQDGSVDFGRKWDPYKQGFGNIATNAEGKKYCGVPGEYWLGNDRISQLTNMGPTKLLIEMEDWKGDKVTALYEGFTVQNEANKYQLSVSKYKGTAGNALIEGASQLVGENRTMTIHNSMFFSTYDRDNDGWKTTDPRKQCSKEDGGGWWYNRCHAANPNGRYYWGGAYTWDMAKHGTDDGVVWMNWQGSWYSMKKMSMKIRPYFPEQ</sequence>
<protein>
    <recommendedName>
        <fullName>Fibrinogen beta chain</fullName>
    </recommendedName>
    <component>
        <recommendedName>
            <fullName>Fibrinopeptide B</fullName>
        </recommendedName>
    </component>
    <component>
        <recommendedName>
            <fullName>Fibrinogen beta chain</fullName>
        </recommendedName>
    </component>
</protein>
<accession>P02676</accession>
<keyword id="KW-0002">3D-structure</keyword>
<keyword id="KW-1064">Adaptive immunity</keyword>
<keyword id="KW-0094">Blood coagulation</keyword>
<keyword id="KW-0175">Coiled coil</keyword>
<keyword id="KW-0903">Direct protein sequencing</keyword>
<keyword id="KW-1015">Disulfide bond</keyword>
<keyword id="KW-0325">Glycoprotein</keyword>
<keyword id="KW-0356">Hemostasis</keyword>
<keyword id="KW-0391">Immunity</keyword>
<keyword id="KW-0399">Innate immunity</keyword>
<keyword id="KW-0873">Pyrrolidone carboxylic acid</keyword>
<keyword id="KW-1185">Reference proteome</keyword>
<keyword id="KW-0964">Secreted</keyword>
<keyword id="KW-0765">Sulfation</keyword>
<evidence type="ECO:0000250" key="1">
    <source>
        <dbReference type="UniProtKB" id="E9PV24"/>
    </source>
</evidence>
<evidence type="ECO:0000250" key="2">
    <source>
        <dbReference type="UniProtKB" id="P02675"/>
    </source>
</evidence>
<evidence type="ECO:0000255" key="3">
    <source>
        <dbReference type="PROSITE-ProRule" id="PRU00739"/>
    </source>
</evidence>
<evidence type="ECO:0000256" key="4">
    <source>
        <dbReference type="SAM" id="MobiDB-lite"/>
    </source>
</evidence>
<evidence type="ECO:0000269" key="5">
    <source>
    </source>
</evidence>
<evidence type="ECO:0000269" key="6">
    <source>
    </source>
</evidence>
<evidence type="ECO:0000269" key="7">
    <source>
    </source>
</evidence>
<evidence type="ECO:0000269" key="8">
    <source>
    </source>
</evidence>
<evidence type="ECO:0000269" key="9">
    <source ref="1"/>
</evidence>
<evidence type="ECO:0000269" key="10">
    <source ref="2"/>
</evidence>
<evidence type="ECO:0000305" key="11"/>
<evidence type="ECO:0000305" key="12">
    <source>
    </source>
</evidence>
<evidence type="ECO:0007829" key="13">
    <source>
        <dbReference type="PDB" id="1JY2"/>
    </source>
</evidence>